<name>MRAY_PROMA</name>
<organism>
    <name type="scientific">Prochlorococcus marinus (strain SARG / CCMP1375 / SS120)</name>
    <dbReference type="NCBI Taxonomy" id="167539"/>
    <lineage>
        <taxon>Bacteria</taxon>
        <taxon>Bacillati</taxon>
        <taxon>Cyanobacteriota</taxon>
        <taxon>Cyanophyceae</taxon>
        <taxon>Synechococcales</taxon>
        <taxon>Prochlorococcaceae</taxon>
        <taxon>Prochlorococcus</taxon>
    </lineage>
</organism>
<dbReference type="EC" id="2.7.8.13" evidence="1"/>
<dbReference type="EMBL" id="AE017126">
    <property type="protein sequence ID" value="AAQ00922.1"/>
    <property type="molecule type" value="Genomic_DNA"/>
</dbReference>
<dbReference type="RefSeq" id="NP_876269.1">
    <property type="nucleotide sequence ID" value="NC_005042.1"/>
</dbReference>
<dbReference type="RefSeq" id="WP_011126027.1">
    <property type="nucleotide sequence ID" value="NC_005042.1"/>
</dbReference>
<dbReference type="SMR" id="Q7V9F5"/>
<dbReference type="STRING" id="167539.Pro_1878"/>
<dbReference type="EnsemblBacteria" id="AAQ00922">
    <property type="protein sequence ID" value="AAQ00922"/>
    <property type="gene ID" value="Pro_1878"/>
</dbReference>
<dbReference type="KEGG" id="pma:Pro_1878"/>
<dbReference type="PATRIC" id="fig|167539.5.peg.1981"/>
<dbReference type="eggNOG" id="COG0472">
    <property type="taxonomic scope" value="Bacteria"/>
</dbReference>
<dbReference type="HOGENOM" id="CLU_023982_0_2_3"/>
<dbReference type="OrthoDB" id="9805475at2"/>
<dbReference type="UniPathway" id="UPA00219"/>
<dbReference type="Proteomes" id="UP000001420">
    <property type="component" value="Chromosome"/>
</dbReference>
<dbReference type="GO" id="GO:0005886">
    <property type="term" value="C:plasma membrane"/>
    <property type="evidence" value="ECO:0007669"/>
    <property type="project" value="UniProtKB-SubCell"/>
</dbReference>
<dbReference type="GO" id="GO:0046872">
    <property type="term" value="F:metal ion binding"/>
    <property type="evidence" value="ECO:0007669"/>
    <property type="project" value="UniProtKB-KW"/>
</dbReference>
<dbReference type="GO" id="GO:0008963">
    <property type="term" value="F:phospho-N-acetylmuramoyl-pentapeptide-transferase activity"/>
    <property type="evidence" value="ECO:0007669"/>
    <property type="project" value="UniProtKB-UniRule"/>
</dbReference>
<dbReference type="GO" id="GO:0051992">
    <property type="term" value="F:UDP-N-acetylmuramoyl-L-alanyl-D-glutamyl-meso-2,6-diaminopimelyl-D-alanyl-D-alanine:undecaprenyl-phosphate transferase activity"/>
    <property type="evidence" value="ECO:0007669"/>
    <property type="project" value="RHEA"/>
</dbReference>
<dbReference type="GO" id="GO:0051301">
    <property type="term" value="P:cell division"/>
    <property type="evidence" value="ECO:0007669"/>
    <property type="project" value="UniProtKB-KW"/>
</dbReference>
<dbReference type="GO" id="GO:0071555">
    <property type="term" value="P:cell wall organization"/>
    <property type="evidence" value="ECO:0007669"/>
    <property type="project" value="UniProtKB-KW"/>
</dbReference>
<dbReference type="GO" id="GO:0009252">
    <property type="term" value="P:peptidoglycan biosynthetic process"/>
    <property type="evidence" value="ECO:0007669"/>
    <property type="project" value="UniProtKB-UniRule"/>
</dbReference>
<dbReference type="GO" id="GO:0008360">
    <property type="term" value="P:regulation of cell shape"/>
    <property type="evidence" value="ECO:0007669"/>
    <property type="project" value="UniProtKB-KW"/>
</dbReference>
<dbReference type="CDD" id="cd06852">
    <property type="entry name" value="GT_MraY"/>
    <property type="match status" value="1"/>
</dbReference>
<dbReference type="HAMAP" id="MF_00038">
    <property type="entry name" value="MraY"/>
    <property type="match status" value="1"/>
</dbReference>
<dbReference type="InterPro" id="IPR000715">
    <property type="entry name" value="Glycosyl_transferase_4"/>
</dbReference>
<dbReference type="InterPro" id="IPR003524">
    <property type="entry name" value="PNAcMuramoyl-5peptid_Trfase"/>
</dbReference>
<dbReference type="InterPro" id="IPR018480">
    <property type="entry name" value="PNAcMuramoyl-5peptid_Trfase_CS"/>
</dbReference>
<dbReference type="NCBIfam" id="TIGR00445">
    <property type="entry name" value="mraY"/>
    <property type="match status" value="1"/>
</dbReference>
<dbReference type="PANTHER" id="PTHR22926">
    <property type="entry name" value="PHOSPHO-N-ACETYLMURAMOYL-PENTAPEPTIDE-TRANSFERASE"/>
    <property type="match status" value="1"/>
</dbReference>
<dbReference type="PANTHER" id="PTHR22926:SF5">
    <property type="entry name" value="PHOSPHO-N-ACETYLMURAMOYL-PENTAPEPTIDE-TRANSFERASE HOMOLOG"/>
    <property type="match status" value="1"/>
</dbReference>
<dbReference type="Pfam" id="PF00953">
    <property type="entry name" value="Glycos_transf_4"/>
    <property type="match status" value="1"/>
</dbReference>
<dbReference type="Pfam" id="PF10555">
    <property type="entry name" value="MraY_sig1"/>
    <property type="match status" value="1"/>
</dbReference>
<dbReference type="PROSITE" id="PS01347">
    <property type="entry name" value="MRAY_1"/>
    <property type="match status" value="1"/>
</dbReference>
<dbReference type="PROSITE" id="PS01348">
    <property type="entry name" value="MRAY_2"/>
    <property type="match status" value="1"/>
</dbReference>
<proteinExistence type="inferred from homology"/>
<comment type="function">
    <text evidence="1">Catalyzes the initial step of the lipid cycle reactions in the biosynthesis of the cell wall peptidoglycan: transfers peptidoglycan precursor phospho-MurNAc-pentapeptide from UDP-MurNAc-pentapeptide onto the lipid carrier undecaprenyl phosphate, yielding undecaprenyl-pyrophosphoryl-MurNAc-pentapeptide, known as lipid I.</text>
</comment>
<comment type="catalytic activity">
    <reaction evidence="1">
        <text>UDP-N-acetyl-alpha-D-muramoyl-L-alanyl-gamma-D-glutamyl-meso-2,6-diaminopimeloyl-D-alanyl-D-alanine + di-trans,octa-cis-undecaprenyl phosphate = di-trans,octa-cis-undecaprenyl diphospho-N-acetyl-alpha-D-muramoyl-L-alanyl-D-glutamyl-meso-2,6-diaminopimeloyl-D-alanyl-D-alanine + UMP</text>
        <dbReference type="Rhea" id="RHEA:28386"/>
        <dbReference type="ChEBI" id="CHEBI:57865"/>
        <dbReference type="ChEBI" id="CHEBI:60392"/>
        <dbReference type="ChEBI" id="CHEBI:61386"/>
        <dbReference type="ChEBI" id="CHEBI:61387"/>
        <dbReference type="EC" id="2.7.8.13"/>
    </reaction>
</comment>
<comment type="cofactor">
    <cofactor evidence="1">
        <name>Mg(2+)</name>
        <dbReference type="ChEBI" id="CHEBI:18420"/>
    </cofactor>
</comment>
<comment type="pathway">
    <text evidence="1">Cell wall biogenesis; peptidoglycan biosynthesis.</text>
</comment>
<comment type="subcellular location">
    <subcellularLocation>
        <location evidence="1">Cell inner membrane</location>
        <topology evidence="1">Multi-pass membrane protein</topology>
    </subcellularLocation>
</comment>
<comment type="similarity">
    <text evidence="1">Belongs to the glycosyltransferase 4 family. MraY subfamily.</text>
</comment>
<feature type="chain" id="PRO_0000108868" description="Phospho-N-acetylmuramoyl-pentapeptide-transferase">
    <location>
        <begin position="1"/>
        <end position="370"/>
    </location>
</feature>
<feature type="transmembrane region" description="Helical" evidence="1">
    <location>
        <begin position="21"/>
        <end position="41"/>
    </location>
</feature>
<feature type="transmembrane region" description="Helical" evidence="1">
    <location>
        <begin position="46"/>
        <end position="66"/>
    </location>
</feature>
<feature type="transmembrane region" description="Helical" evidence="1">
    <location>
        <begin position="92"/>
        <end position="112"/>
    </location>
</feature>
<feature type="transmembrane region" description="Helical" evidence="1">
    <location>
        <begin position="117"/>
        <end position="137"/>
    </location>
</feature>
<feature type="transmembrane region" description="Helical" evidence="1">
    <location>
        <begin position="151"/>
        <end position="171"/>
    </location>
</feature>
<feature type="transmembrane region" description="Helical" evidence="1">
    <location>
        <begin position="181"/>
        <end position="201"/>
    </location>
</feature>
<feature type="transmembrane region" description="Helical" evidence="1">
    <location>
        <begin position="217"/>
        <end position="237"/>
    </location>
</feature>
<feature type="transmembrane region" description="Helical" evidence="1">
    <location>
        <begin position="243"/>
        <end position="263"/>
    </location>
</feature>
<feature type="transmembrane region" description="Helical" evidence="1">
    <location>
        <begin position="270"/>
        <end position="290"/>
    </location>
</feature>
<feature type="transmembrane region" description="Helical" evidence="1">
    <location>
        <begin position="298"/>
        <end position="318"/>
    </location>
</feature>
<feature type="transmembrane region" description="Helical" evidence="1">
    <location>
        <begin position="349"/>
        <end position="369"/>
    </location>
</feature>
<protein>
    <recommendedName>
        <fullName evidence="1">Phospho-N-acetylmuramoyl-pentapeptide-transferase</fullName>
        <ecNumber evidence="1">2.7.8.13</ecNumber>
    </recommendedName>
    <alternativeName>
        <fullName evidence="1">UDP-MurNAc-pentapeptide phosphotransferase</fullName>
    </alternativeName>
</protein>
<sequence>MNWKKYINRFKSRDLSENGLPTSILLIIGIIVVSIIVDLFIQKSLLLVPLISSIIISAIITKWGIIKLKKINCRQVVRKEGPSGHFQKSGTPSMGGIFIVPISLILTNLFALSNNTFSKQLVALSFLSLAYMLIGLIDDWQSITLKRNKGLSVKSKVILQTIVGIIFLVLIYSQDLNNTDILIFGNNTINLGLLFWPIALFILLAESNATNLTDGLDGLASGCGAIVFTGLAIELIIRGNNENYAIASFCITMAGAWLGFLIFNRKPAKVFMGDTGSLAMGASLAGVALLTNTLWSLLIMGVIFLAESVSVIIQVGVFKTTKKIIGKGYRVFNMAPLHHHFELEGTKETIIVQNFWLITICFVCMAIMLR</sequence>
<evidence type="ECO:0000255" key="1">
    <source>
        <dbReference type="HAMAP-Rule" id="MF_00038"/>
    </source>
</evidence>
<accession>Q7V9F5</accession>
<keyword id="KW-0131">Cell cycle</keyword>
<keyword id="KW-0132">Cell division</keyword>
<keyword id="KW-0997">Cell inner membrane</keyword>
<keyword id="KW-1003">Cell membrane</keyword>
<keyword id="KW-0133">Cell shape</keyword>
<keyword id="KW-0961">Cell wall biogenesis/degradation</keyword>
<keyword id="KW-0460">Magnesium</keyword>
<keyword id="KW-0472">Membrane</keyword>
<keyword id="KW-0479">Metal-binding</keyword>
<keyword id="KW-0573">Peptidoglycan synthesis</keyword>
<keyword id="KW-1185">Reference proteome</keyword>
<keyword id="KW-0808">Transferase</keyword>
<keyword id="KW-0812">Transmembrane</keyword>
<keyword id="KW-1133">Transmembrane helix</keyword>
<reference key="1">
    <citation type="journal article" date="2003" name="Proc. Natl. Acad. Sci. U.S.A.">
        <title>Genome sequence of the cyanobacterium Prochlorococcus marinus SS120, a nearly minimal oxyphototrophic genome.</title>
        <authorList>
            <person name="Dufresne A."/>
            <person name="Salanoubat M."/>
            <person name="Partensky F."/>
            <person name="Artiguenave F."/>
            <person name="Axmann I.M."/>
            <person name="Barbe V."/>
            <person name="Duprat S."/>
            <person name="Galperin M.Y."/>
            <person name="Koonin E.V."/>
            <person name="Le Gall F."/>
            <person name="Makarova K.S."/>
            <person name="Ostrowski M."/>
            <person name="Oztas S."/>
            <person name="Robert C."/>
            <person name="Rogozin I.B."/>
            <person name="Scanlan D.J."/>
            <person name="Tandeau de Marsac N."/>
            <person name="Weissenbach J."/>
            <person name="Wincker P."/>
            <person name="Wolf Y.I."/>
            <person name="Hess W.R."/>
        </authorList>
    </citation>
    <scope>NUCLEOTIDE SEQUENCE [LARGE SCALE GENOMIC DNA]</scope>
    <source>
        <strain>SARG / CCMP1375 / SS120</strain>
    </source>
</reference>
<gene>
    <name evidence="1" type="primary">mraY</name>
    <name type="ordered locus">Pro_1878</name>
</gene>